<gene>
    <name type="primary">HTR7</name>
</gene>
<feature type="chain" id="PRO_0000068978" description="5-hydroxytryptamine receptor 7">
    <location>
        <begin position="1"/>
        <end position="446"/>
    </location>
</feature>
<feature type="topological domain" description="Extracellular" evidence="1">
    <location>
        <begin position="1"/>
        <end position="84"/>
    </location>
</feature>
<feature type="transmembrane region" description="Helical; Name=1" evidence="1">
    <location>
        <begin position="85"/>
        <end position="109"/>
    </location>
</feature>
<feature type="topological domain" description="Cytoplasmic" evidence="1">
    <location>
        <begin position="110"/>
        <end position="119"/>
    </location>
</feature>
<feature type="transmembrane region" description="Helical; Name=2" evidence="1">
    <location>
        <begin position="120"/>
        <end position="141"/>
    </location>
</feature>
<feature type="topological domain" description="Extracellular" evidence="1">
    <location>
        <begin position="142"/>
        <end position="153"/>
    </location>
</feature>
<feature type="transmembrane region" description="Helical; Name=3" evidence="1">
    <location>
        <begin position="154"/>
        <end position="179"/>
    </location>
</feature>
<feature type="topological domain" description="Cytoplasmic" evidence="1">
    <location>
        <begin position="180"/>
        <end position="199"/>
    </location>
</feature>
<feature type="transmembrane region" description="Helical; Name=4" evidence="1">
    <location>
        <begin position="200"/>
        <end position="220"/>
    </location>
</feature>
<feature type="topological domain" description="Extracellular" evidence="1">
    <location>
        <begin position="221"/>
        <end position="238"/>
    </location>
</feature>
<feature type="transmembrane region" description="Helical; Name=5" evidence="1">
    <location>
        <begin position="239"/>
        <end position="261"/>
    </location>
</feature>
<feature type="topological domain" description="Cytoplasmic" evidence="1 5">
    <location>
        <begin position="262"/>
        <end position="327"/>
    </location>
</feature>
<feature type="transmembrane region" description="Helical; Name=6" evidence="1">
    <location>
        <begin position="328"/>
        <end position="353"/>
    </location>
</feature>
<feature type="topological domain" description="Extracellular" evidence="1">
    <location>
        <begin position="354"/>
        <end position="364"/>
    </location>
</feature>
<feature type="transmembrane region" description="Helical; Name=7" evidence="1">
    <location>
        <begin position="365"/>
        <end position="388"/>
    </location>
</feature>
<feature type="topological domain" description="Cytoplasmic" evidence="1">
    <location>
        <begin position="389"/>
        <end position="446"/>
    </location>
</feature>
<feature type="binding site" evidence="2">
    <location>
        <position position="163"/>
    </location>
    <ligand>
        <name>serotonin</name>
        <dbReference type="ChEBI" id="CHEBI:350546"/>
    </ligand>
</feature>
<feature type="lipid moiety-binding region" description="S-palmitoyl cysteine" evidence="3">
    <location>
        <position position="402"/>
    </location>
</feature>
<feature type="glycosylation site" description="N-linked (GlcNAc...) asparagine" evidence="3">
    <location>
        <position position="5"/>
    </location>
</feature>
<feature type="glycosylation site" description="N-linked (GlcNAc...) asparagine" evidence="3">
    <location>
        <position position="67"/>
    </location>
</feature>
<feature type="disulfide bond" evidence="4">
    <location>
        <begin position="156"/>
        <end position="232"/>
    </location>
</feature>
<protein>
    <recommendedName>
        <fullName>5-hydroxytryptamine receptor 7</fullName>
        <shortName>5-HT-7</shortName>
        <shortName>5-HT7</shortName>
    </recommendedName>
    <alternativeName>
        <fullName>5-HT-X</fullName>
    </alternativeName>
    <alternativeName>
        <fullName>Serotonin receptor 7</fullName>
    </alternativeName>
</protein>
<dbReference type="EMBL" id="U41372">
    <property type="protein sequence ID" value="AAA83015.1"/>
    <property type="molecule type" value="mRNA"/>
</dbReference>
<dbReference type="RefSeq" id="NP_001166435.1">
    <property type="nucleotide sequence ID" value="NM_001172964.1"/>
</dbReference>
<dbReference type="SMR" id="P50407"/>
<dbReference type="FunCoup" id="P50407">
    <property type="interactions" value="786"/>
</dbReference>
<dbReference type="STRING" id="10141.ENSCPOP00000023729"/>
<dbReference type="BindingDB" id="P50407"/>
<dbReference type="ChEMBL" id="CHEMBL5494"/>
<dbReference type="GlyCosmos" id="P50407">
    <property type="glycosylation" value="2 sites, No reported glycans"/>
</dbReference>
<dbReference type="GeneID" id="100135549"/>
<dbReference type="KEGG" id="cpoc:100135549"/>
<dbReference type="CTD" id="3363"/>
<dbReference type="eggNOG" id="KOG3656">
    <property type="taxonomic scope" value="Eukaryota"/>
</dbReference>
<dbReference type="InParanoid" id="P50407"/>
<dbReference type="OrthoDB" id="10063595at2759"/>
<dbReference type="PRO" id="PR:P50407"/>
<dbReference type="Proteomes" id="UP000005447">
    <property type="component" value="Unassembled WGS sequence"/>
</dbReference>
<dbReference type="GO" id="GO:0005886">
    <property type="term" value="C:plasma membrane"/>
    <property type="evidence" value="ECO:0000250"/>
    <property type="project" value="UniProtKB"/>
</dbReference>
<dbReference type="GO" id="GO:0045202">
    <property type="term" value="C:synapse"/>
    <property type="evidence" value="ECO:0007669"/>
    <property type="project" value="GOC"/>
</dbReference>
<dbReference type="GO" id="GO:0004993">
    <property type="term" value="F:G protein-coupled serotonin receptor activity"/>
    <property type="evidence" value="ECO:0000250"/>
    <property type="project" value="UniProtKB"/>
</dbReference>
<dbReference type="GO" id="GO:0071880">
    <property type="term" value="P:adenylate cyclase-activating adrenergic receptor signaling pathway"/>
    <property type="evidence" value="ECO:0007669"/>
    <property type="project" value="TreeGrafter"/>
</dbReference>
<dbReference type="GO" id="GO:0007192">
    <property type="term" value="P:adenylate cyclase-activating serotonin receptor signaling pathway"/>
    <property type="evidence" value="ECO:0000250"/>
    <property type="project" value="UniProtKB"/>
</dbReference>
<dbReference type="GO" id="GO:0007268">
    <property type="term" value="P:chemical synaptic transmission"/>
    <property type="evidence" value="ECO:0007669"/>
    <property type="project" value="InterPro"/>
</dbReference>
<dbReference type="GO" id="GO:0007623">
    <property type="term" value="P:circadian rhythm"/>
    <property type="evidence" value="ECO:0007669"/>
    <property type="project" value="InterPro"/>
</dbReference>
<dbReference type="GO" id="GO:0043410">
    <property type="term" value="P:positive regulation of MAPK cascade"/>
    <property type="evidence" value="ECO:0007669"/>
    <property type="project" value="TreeGrafter"/>
</dbReference>
<dbReference type="GO" id="GO:0006939">
    <property type="term" value="P:smooth muscle contraction"/>
    <property type="evidence" value="ECO:0007669"/>
    <property type="project" value="InterPro"/>
</dbReference>
<dbReference type="GO" id="GO:0042310">
    <property type="term" value="P:vasoconstriction"/>
    <property type="evidence" value="ECO:0007669"/>
    <property type="project" value="InterPro"/>
</dbReference>
<dbReference type="CDD" id="cd15329">
    <property type="entry name" value="7tmA_5-HT7"/>
    <property type="match status" value="1"/>
</dbReference>
<dbReference type="FunFam" id="1.20.1070.10:FF:000071">
    <property type="entry name" value="5-hydroxytryptamine (serotonin) receptor 7a"/>
    <property type="match status" value="1"/>
</dbReference>
<dbReference type="Gene3D" id="1.20.1070.10">
    <property type="entry name" value="Rhodopsin 7-helix transmembrane proteins"/>
    <property type="match status" value="1"/>
</dbReference>
<dbReference type="InterPro" id="IPR001069">
    <property type="entry name" value="5HT_7_rcpt"/>
</dbReference>
<dbReference type="InterPro" id="IPR000276">
    <property type="entry name" value="GPCR_Rhodpsn"/>
</dbReference>
<dbReference type="InterPro" id="IPR017452">
    <property type="entry name" value="GPCR_Rhodpsn_7TM"/>
</dbReference>
<dbReference type="PANTHER" id="PTHR24248">
    <property type="entry name" value="ADRENERGIC RECEPTOR-RELATED G-PROTEIN COUPLED RECEPTOR"/>
    <property type="match status" value="1"/>
</dbReference>
<dbReference type="PANTHER" id="PTHR24248:SF199">
    <property type="entry name" value="IP13425P-RELATED"/>
    <property type="match status" value="1"/>
</dbReference>
<dbReference type="Pfam" id="PF00001">
    <property type="entry name" value="7tm_1"/>
    <property type="match status" value="1"/>
</dbReference>
<dbReference type="PRINTS" id="PR00652">
    <property type="entry name" value="5HT7RECEPTR"/>
</dbReference>
<dbReference type="PRINTS" id="PR00237">
    <property type="entry name" value="GPCRRHODOPSN"/>
</dbReference>
<dbReference type="SUPFAM" id="SSF81321">
    <property type="entry name" value="Family A G protein-coupled receptor-like"/>
    <property type="match status" value="1"/>
</dbReference>
<dbReference type="PROSITE" id="PS00237">
    <property type="entry name" value="G_PROTEIN_RECEP_F1_1"/>
    <property type="match status" value="1"/>
</dbReference>
<dbReference type="PROSITE" id="PS50262">
    <property type="entry name" value="G_PROTEIN_RECEP_F1_2"/>
    <property type="match status" value="1"/>
</dbReference>
<proteinExistence type="evidence at transcript level"/>
<sequence length="446" mass="49614">MMGVNSSGRPDLYGHLHSILLPGRGLPDWSPDGGADPGVSTWTPRLLSGVPEVAASPSPSWDGTWDNVSGCGEQINYGRAEKVVIGSILTLITLLTIAGNCLVVISVCFVKKLRQPSNYLIVSLALADLSVAVAVIPFVSVTDLIGGKWIFGHFFCNVFIAMDVMCCTASIMTLCVISIDRYLGITRPLTYPVRQNGKCMPKMILSVWLLSASITLPPLFGWAQNVNDDKVCLISQDFGYTIYSTAVAFYIPMSVMLFMYYRIYKAARKSAAKHKFPGFPRVQPESIISLNGMVKLQKEVEECANLSRLLKHERKNISIFKREQKAATTLGIIVGAFTVCWLPFFLLSTARPFICGTACSCIPLWVERTCLWLGYANSLINPFIYAFFNRDLRTTYRSLLQCQYRNINRKLSAAGMHEALKLAERPERPECVLQNSDYCRKKGHDS</sequence>
<reference key="1">
    <citation type="journal article" date="1994" name="J. Neurochem.">
        <title>Cloning and expression of a 5-hydroxytryptamine7 receptor positively coupled to adenylyl cyclase.</title>
        <authorList>
            <person name="Tsou A."/>
            <person name="Kosaka A."/>
            <person name="Bach C."/>
            <person name="Zuppan P."/>
            <person name="Yee C."/>
            <person name="Tom L."/>
            <person name="Alvarez R."/>
            <person name="Ramsey S."/>
            <person name="Bonhaus D.W."/>
            <person name="Stefanich E."/>
            <person name="Jakeman L."/>
            <person name="Eglen R.M."/>
            <person name="Chan H.W."/>
        </authorList>
    </citation>
    <scope>NUCLEOTIDE SEQUENCE [MRNA]</scope>
    <source>
        <tissue>Hippocampus</tissue>
    </source>
</reference>
<keyword id="KW-1003">Cell membrane</keyword>
<keyword id="KW-1015">Disulfide bond</keyword>
<keyword id="KW-0297">G-protein coupled receptor</keyword>
<keyword id="KW-0325">Glycoprotein</keyword>
<keyword id="KW-0449">Lipoprotein</keyword>
<keyword id="KW-0472">Membrane</keyword>
<keyword id="KW-0564">Palmitate</keyword>
<keyword id="KW-0675">Receptor</keyword>
<keyword id="KW-1185">Reference proteome</keyword>
<keyword id="KW-0807">Transducer</keyword>
<keyword id="KW-0812">Transmembrane</keyword>
<keyword id="KW-1133">Transmembrane helix</keyword>
<comment type="function">
    <text evidence="1">G-protein coupled receptor for 5-hydroxytryptamine (serotonin), a biogenic hormone that functions as a neurotransmitter, a hormone and a mitogen. Ligand binding causes a conformation change that triggers signaling via guanine nucleotide-binding proteins (G proteins) and modulates the activity of downstream effectors. HTR7 is coupled to G(s) G alpha proteins and mediates activation of adenylate cyclase activity.</text>
</comment>
<comment type="subcellular location">
    <subcellularLocation>
        <location evidence="1">Cell membrane</location>
        <topology evidence="1">Multi-pass membrane protein</topology>
    </subcellularLocation>
</comment>
<comment type="domain">
    <text evidence="2">Specificity for G(s) G alpha proteins is determined by the length of transmembrane regions 5 and 6 (TM5 and TM6).</text>
</comment>
<comment type="similarity">
    <text evidence="4">Belongs to the G-protein coupled receptor 1 family.</text>
</comment>
<name>5HT7R_CAVPO</name>
<organism>
    <name type="scientific">Cavia porcellus</name>
    <name type="common">Guinea pig</name>
    <dbReference type="NCBI Taxonomy" id="10141"/>
    <lineage>
        <taxon>Eukaryota</taxon>
        <taxon>Metazoa</taxon>
        <taxon>Chordata</taxon>
        <taxon>Craniata</taxon>
        <taxon>Vertebrata</taxon>
        <taxon>Euteleostomi</taxon>
        <taxon>Mammalia</taxon>
        <taxon>Eutheria</taxon>
        <taxon>Euarchontoglires</taxon>
        <taxon>Glires</taxon>
        <taxon>Rodentia</taxon>
        <taxon>Hystricomorpha</taxon>
        <taxon>Caviidae</taxon>
        <taxon>Cavia</taxon>
    </lineage>
</organism>
<evidence type="ECO:0000250" key="1">
    <source>
        <dbReference type="UniProtKB" id="P34969"/>
    </source>
</evidence>
<evidence type="ECO:0000250" key="2">
    <source>
        <dbReference type="UniProtKB" id="Q13639"/>
    </source>
</evidence>
<evidence type="ECO:0000255" key="3"/>
<evidence type="ECO:0000255" key="4">
    <source>
        <dbReference type="PROSITE-ProRule" id="PRU00521"/>
    </source>
</evidence>
<evidence type="ECO:0000305" key="5"/>
<accession>P50407</accession>